<gene>
    <name evidence="1" type="primary">rimP</name>
    <name type="ordered locus">TT_C0350</name>
</gene>
<feature type="chain" id="PRO_0000181944" description="Ribosome maturation factor RimP">
    <location>
        <begin position="1"/>
        <end position="157"/>
    </location>
</feature>
<reference key="1">
    <citation type="journal article" date="2004" name="Nat. Biotechnol.">
        <title>The genome sequence of the extreme thermophile Thermus thermophilus.</title>
        <authorList>
            <person name="Henne A."/>
            <person name="Brueggemann H."/>
            <person name="Raasch C."/>
            <person name="Wiezer A."/>
            <person name="Hartsch T."/>
            <person name="Liesegang H."/>
            <person name="Johann A."/>
            <person name="Lienard T."/>
            <person name="Gohl O."/>
            <person name="Martinez-Arias R."/>
            <person name="Jacobi C."/>
            <person name="Starkuviene V."/>
            <person name="Schlenczeck S."/>
            <person name="Dencker S."/>
            <person name="Huber R."/>
            <person name="Klenk H.-P."/>
            <person name="Kramer W."/>
            <person name="Merkl R."/>
            <person name="Gottschalk G."/>
            <person name="Fritz H.-J."/>
        </authorList>
    </citation>
    <scope>NUCLEOTIDE SEQUENCE [LARGE SCALE GENOMIC DNA]</scope>
    <source>
        <strain>ATCC BAA-163 / DSM 7039 / HB27</strain>
    </source>
</reference>
<organism>
    <name type="scientific">Thermus thermophilus (strain ATCC BAA-163 / DSM 7039 / HB27)</name>
    <dbReference type="NCBI Taxonomy" id="262724"/>
    <lineage>
        <taxon>Bacteria</taxon>
        <taxon>Thermotogati</taxon>
        <taxon>Deinococcota</taxon>
        <taxon>Deinococci</taxon>
        <taxon>Thermales</taxon>
        <taxon>Thermaceae</taxon>
        <taxon>Thermus</taxon>
    </lineage>
</organism>
<dbReference type="EMBL" id="AE017221">
    <property type="protein sequence ID" value="AAS80698.1"/>
    <property type="molecule type" value="Genomic_DNA"/>
</dbReference>
<dbReference type="RefSeq" id="WP_011172800.1">
    <property type="nucleotide sequence ID" value="NC_005835.1"/>
</dbReference>
<dbReference type="SMR" id="Q72KG3"/>
<dbReference type="GeneID" id="3168396"/>
<dbReference type="KEGG" id="tth:TT_C0350"/>
<dbReference type="eggNOG" id="COG0779">
    <property type="taxonomic scope" value="Bacteria"/>
</dbReference>
<dbReference type="HOGENOM" id="CLU_070525_1_1_0"/>
<dbReference type="OrthoDB" id="9805006at2"/>
<dbReference type="Proteomes" id="UP000000592">
    <property type="component" value="Chromosome"/>
</dbReference>
<dbReference type="GO" id="GO:0005829">
    <property type="term" value="C:cytosol"/>
    <property type="evidence" value="ECO:0007669"/>
    <property type="project" value="TreeGrafter"/>
</dbReference>
<dbReference type="GO" id="GO:0000028">
    <property type="term" value="P:ribosomal small subunit assembly"/>
    <property type="evidence" value="ECO:0007669"/>
    <property type="project" value="TreeGrafter"/>
</dbReference>
<dbReference type="GO" id="GO:0006412">
    <property type="term" value="P:translation"/>
    <property type="evidence" value="ECO:0007669"/>
    <property type="project" value="TreeGrafter"/>
</dbReference>
<dbReference type="Gene3D" id="3.30.300.70">
    <property type="entry name" value="RimP-like superfamily, N-terminal"/>
    <property type="match status" value="1"/>
</dbReference>
<dbReference type="HAMAP" id="MF_01077">
    <property type="entry name" value="RimP"/>
    <property type="match status" value="1"/>
</dbReference>
<dbReference type="InterPro" id="IPR003728">
    <property type="entry name" value="Ribosome_maturation_RimP"/>
</dbReference>
<dbReference type="InterPro" id="IPR028998">
    <property type="entry name" value="RimP_C"/>
</dbReference>
<dbReference type="InterPro" id="IPR036847">
    <property type="entry name" value="RimP_C_sf"/>
</dbReference>
<dbReference type="InterPro" id="IPR028989">
    <property type="entry name" value="RimP_N"/>
</dbReference>
<dbReference type="InterPro" id="IPR035956">
    <property type="entry name" value="RimP_N_sf"/>
</dbReference>
<dbReference type="NCBIfam" id="NF011239">
    <property type="entry name" value="PRK14645.1"/>
    <property type="match status" value="1"/>
</dbReference>
<dbReference type="PANTHER" id="PTHR33867">
    <property type="entry name" value="RIBOSOME MATURATION FACTOR RIMP"/>
    <property type="match status" value="1"/>
</dbReference>
<dbReference type="PANTHER" id="PTHR33867:SF1">
    <property type="entry name" value="RIBOSOME MATURATION FACTOR RIMP"/>
    <property type="match status" value="1"/>
</dbReference>
<dbReference type="Pfam" id="PF17384">
    <property type="entry name" value="DUF150_C"/>
    <property type="match status" value="1"/>
</dbReference>
<dbReference type="Pfam" id="PF02576">
    <property type="entry name" value="RimP_N"/>
    <property type="match status" value="1"/>
</dbReference>
<dbReference type="SUPFAM" id="SSF74942">
    <property type="entry name" value="YhbC-like, C-terminal domain"/>
    <property type="match status" value="1"/>
</dbReference>
<dbReference type="SUPFAM" id="SSF75420">
    <property type="entry name" value="YhbC-like, N-terminal domain"/>
    <property type="match status" value="1"/>
</dbReference>
<name>RIMP_THET2</name>
<protein>
    <recommendedName>
        <fullName evidence="1">Ribosome maturation factor RimP</fullName>
    </recommendedName>
</protein>
<keyword id="KW-0963">Cytoplasm</keyword>
<keyword id="KW-0690">Ribosome biogenesis</keyword>
<proteinExistence type="inferred from homology"/>
<accession>Q72KG3</accession>
<sequence>MGVNPPFLCEGGGEVTVDLWQLVEEAVSPLGLDVLEVHFARGELLVRLERKDERPITVADLEEASRHIEAALDREDPIPGSYRLLVESPGPKRPLFTRRHFERFQGLKAKVPGPEGFTGRILRVEGEEVVFQVGDEERRLRIGTFRANLAEWPEEPR</sequence>
<comment type="function">
    <text evidence="1">Required for maturation of 30S ribosomal subunits.</text>
</comment>
<comment type="subcellular location">
    <subcellularLocation>
        <location evidence="1">Cytoplasm</location>
    </subcellularLocation>
</comment>
<comment type="similarity">
    <text evidence="1">Belongs to the RimP family.</text>
</comment>
<evidence type="ECO:0000255" key="1">
    <source>
        <dbReference type="HAMAP-Rule" id="MF_01077"/>
    </source>
</evidence>